<comment type="function">
    <text evidence="3 6">Cytochrome P450 monooxygenase; part of the gene cluster that mediates the biosynthesis of oxaleimides, cytotoxic compounds containing an unusual disubstituted succinimide moiety (PubMed:28365998). The first step of the pathway is provided by the HR-PKS poxF that serves in a new mode of collaborative biosynthesis with the PKS-NRPS poxE, by providing the olefin containing amino acid substrate via the synthesis of an ACP-bound dec-4-enoate (PubMed:28365998). The cytochrome P450 monooxygenase poxM-catalyzed oxidation at the alpha-position creates the enzyme-bound 2-hydroxydec-4-enoyl-ACP thioester, which may be prone to spontaneous hydrolysis to yield 2-hydroxydec-4-enoic acid due to increased electrophilicity of the carbonyl (PubMed:28365998). 2-hydroxydec-4-enoic acid can then be further oxidized by poxM to yield the alpha-ketoacid 2-oxodec-4-enoicacid, which is reductively aminated by the aminotransferase poxL to yield (S,E)-2-aminodec-4-enoic acid (PubMed:28365998). The Hybrid PKS-NRPS synthetase poxE then performs condensation between the octaketide product of its PKS modules and the amino group of (S,E)-2-aminodec-4-enoic acid which is activated and incorporated by the adenylation domain (PubMed:28365998). The resulting aminoacyl product can be cyclized by the Diels-Alderase PoxQ and reductively released by the reductive (R) domain of poxE to yield an aldehyde intermediate (Probable) (PubMed:28365998). The released aldehyde is then substrate for a Knoevenagel condensation by the hydrolyase poxO followed by an oxidation at the 5-position of the pyrrolidone ring (PubMed:28365998). The presence of the olefin from the amino acid building block allows for migration of the substituted allyl group to occur (PubMed:28365998). This allylic transposition reaction takes place in a conjugate addition, semipinacol-like fashion to yield a succinimide intermediate (PubMed:28365998). Iterative two-electron oxidations of the C7 methyl of the succinimide intermediate to the carboxylic acid can be catalyzed by one of two remaining cytochrome P450 monooxygenasess poxC or poxD to yield oxaleimide A (PubMed:28365998). Subsequent oxidation yields the maleimide scaffold oxaleimide I (PubMed:28365998). Both oxaleimide A and oxaleimide I can undergo oxidative modifications in the decalin ring to yield the series of products oxaleimides B to H (PubMed:28365998).</text>
</comment>
<comment type="cofactor">
    <cofactor evidence="1">
        <name>heme</name>
        <dbReference type="ChEBI" id="CHEBI:30413"/>
    </cofactor>
</comment>
<comment type="pathway">
    <text evidence="3">Secondary metabolite biosynthesis.</text>
</comment>
<comment type="subcellular location">
    <subcellularLocation>
        <location evidence="2">Membrane</location>
        <topology evidence="2">Single-pass membrane protein</topology>
    </subcellularLocation>
</comment>
<comment type="induction">
    <text evidence="3">Expression is positively regulated by the oxaleimides biosynthesis cluster-specific transcription factor poxB.</text>
</comment>
<comment type="similarity">
    <text evidence="5">Belongs to the cytochrome P450 family.</text>
</comment>
<feature type="chain" id="PRO_0000453766" description="Cytochrome P450 monooxygenase poxM">
    <location>
        <begin position="1"/>
        <end position="512"/>
    </location>
</feature>
<feature type="transmembrane region" description="Helical" evidence="2">
    <location>
        <begin position="15"/>
        <end position="35"/>
    </location>
</feature>
<feature type="binding site" description="axial binding residue" evidence="1">
    <location>
        <position position="449"/>
    </location>
    <ligand>
        <name>heme</name>
        <dbReference type="ChEBI" id="CHEBI:30413"/>
    </ligand>
    <ligandPart>
        <name>Fe</name>
        <dbReference type="ChEBI" id="CHEBI:18248"/>
    </ligandPart>
</feature>
<evidence type="ECO:0000250" key="1">
    <source>
        <dbReference type="UniProtKB" id="P04798"/>
    </source>
</evidence>
<evidence type="ECO:0000255" key="2"/>
<evidence type="ECO:0000269" key="3">
    <source>
    </source>
</evidence>
<evidence type="ECO:0000303" key="4">
    <source>
    </source>
</evidence>
<evidence type="ECO:0000305" key="5"/>
<evidence type="ECO:0000305" key="6">
    <source>
    </source>
</evidence>
<name>POXM_PENO1</name>
<sequence>MNALIGQLLNAPVALLKGATIALSFFSLYLFGLVIYRLIFHPLAQYPGPLLGRITNLYAAYHAWKGDIHEDIWRCHQKHGNCIRYAPDRLAFDTAKAVSDIYGYGGNVRKSQVYDTLVHRTANTLTMRDKKQHAQRRRIMSHGFSDAAIRSFEPRVQELIQTLCDLLIVKDASADSEWSAPQDMAPWFDYLTFDIMSSLIFSASYDTLRQEKYRSVIRAIEESNVRVSVLLQAPIVTLFRSDKKLFSQSILGRNHFTRFIGSTVKERVQKSKLLADRDIFSYFQSSKAAANGDSMNMNELSGEAATLIVAGSDTTATTLAATMFYLSQSADIYHRVAQEVRQCFNSEDEIHAGSQLNACRLLRACIDEALRMSPPAGSALWREVEAGGITVNGRFVPEGYDVGVGIYAVHHNPTVYPQPFRFDPDRWLVDDTHDVRSAFMPFSLGTRSCIGKGLAQMEALLTLANIIWRYDFRAVPGGAVQPEYKLKDHVTGAKTGPVLQYRRIVRDKIMIG</sequence>
<accession>S7ZK63</accession>
<proteinExistence type="evidence at protein level"/>
<dbReference type="EC" id="1.-.-.-" evidence="3"/>
<dbReference type="EMBL" id="KB644411">
    <property type="protein sequence ID" value="EPS29076.1"/>
    <property type="molecule type" value="Genomic_DNA"/>
</dbReference>
<dbReference type="SMR" id="S7ZK63"/>
<dbReference type="STRING" id="933388.S7ZK63"/>
<dbReference type="eggNOG" id="KOG0157">
    <property type="taxonomic scope" value="Eukaryota"/>
</dbReference>
<dbReference type="HOGENOM" id="CLU_001570_14_11_1"/>
<dbReference type="OrthoDB" id="1470350at2759"/>
<dbReference type="PhylomeDB" id="S7ZK63"/>
<dbReference type="Proteomes" id="UP000019376">
    <property type="component" value="Unassembled WGS sequence"/>
</dbReference>
<dbReference type="GO" id="GO:0016020">
    <property type="term" value="C:membrane"/>
    <property type="evidence" value="ECO:0007669"/>
    <property type="project" value="UniProtKB-SubCell"/>
</dbReference>
<dbReference type="GO" id="GO:0020037">
    <property type="term" value="F:heme binding"/>
    <property type="evidence" value="ECO:0007669"/>
    <property type="project" value="InterPro"/>
</dbReference>
<dbReference type="GO" id="GO:0005506">
    <property type="term" value="F:iron ion binding"/>
    <property type="evidence" value="ECO:0007669"/>
    <property type="project" value="InterPro"/>
</dbReference>
<dbReference type="GO" id="GO:0004497">
    <property type="term" value="F:monooxygenase activity"/>
    <property type="evidence" value="ECO:0007669"/>
    <property type="project" value="UniProtKB-KW"/>
</dbReference>
<dbReference type="GO" id="GO:0016705">
    <property type="term" value="F:oxidoreductase activity, acting on paired donors, with incorporation or reduction of molecular oxygen"/>
    <property type="evidence" value="ECO:0007669"/>
    <property type="project" value="InterPro"/>
</dbReference>
<dbReference type="GO" id="GO:0043386">
    <property type="term" value="P:mycotoxin biosynthetic process"/>
    <property type="evidence" value="ECO:0007669"/>
    <property type="project" value="UniProtKB-ARBA"/>
</dbReference>
<dbReference type="CDD" id="cd11061">
    <property type="entry name" value="CYP67-like"/>
    <property type="match status" value="1"/>
</dbReference>
<dbReference type="FunFam" id="1.10.630.10:FF:000063">
    <property type="entry name" value="Cytochrome P450 monooxygenase"/>
    <property type="match status" value="1"/>
</dbReference>
<dbReference type="Gene3D" id="1.10.630.10">
    <property type="entry name" value="Cytochrome P450"/>
    <property type="match status" value="1"/>
</dbReference>
<dbReference type="InterPro" id="IPR001128">
    <property type="entry name" value="Cyt_P450"/>
</dbReference>
<dbReference type="InterPro" id="IPR017972">
    <property type="entry name" value="Cyt_P450_CS"/>
</dbReference>
<dbReference type="InterPro" id="IPR002401">
    <property type="entry name" value="Cyt_P450_E_grp-I"/>
</dbReference>
<dbReference type="InterPro" id="IPR036396">
    <property type="entry name" value="Cyt_P450_sf"/>
</dbReference>
<dbReference type="InterPro" id="IPR050121">
    <property type="entry name" value="Cytochrome_P450_monoxygenase"/>
</dbReference>
<dbReference type="PANTHER" id="PTHR24305">
    <property type="entry name" value="CYTOCHROME P450"/>
    <property type="match status" value="1"/>
</dbReference>
<dbReference type="PANTHER" id="PTHR24305:SF237">
    <property type="entry name" value="CYTOCHROME P450 MONOOXYGENASE ATNE-RELATED"/>
    <property type="match status" value="1"/>
</dbReference>
<dbReference type="Pfam" id="PF00067">
    <property type="entry name" value="p450"/>
    <property type="match status" value="1"/>
</dbReference>
<dbReference type="PRINTS" id="PR00463">
    <property type="entry name" value="EP450I"/>
</dbReference>
<dbReference type="PRINTS" id="PR00385">
    <property type="entry name" value="P450"/>
</dbReference>
<dbReference type="SUPFAM" id="SSF48264">
    <property type="entry name" value="Cytochrome P450"/>
    <property type="match status" value="1"/>
</dbReference>
<dbReference type="PROSITE" id="PS00086">
    <property type="entry name" value="CYTOCHROME_P450"/>
    <property type="match status" value="1"/>
</dbReference>
<protein>
    <recommendedName>
        <fullName evidence="4">Cytochrome P450 monooxygenase poxM</fullName>
        <ecNumber evidence="3">1.-.-.-</ecNumber>
    </recommendedName>
    <alternativeName>
        <fullName evidence="4">Oxaleimides biosynthesis cluster protein M</fullName>
    </alternativeName>
</protein>
<reference key="1">
    <citation type="journal article" date="2013" name="PLoS ONE">
        <title>Genomic and secretomic analyses reveal unique features of the lignocellulolytic enzyme system of Penicillium decumbens.</title>
        <authorList>
            <person name="Liu G."/>
            <person name="Zhang L."/>
            <person name="Wei X."/>
            <person name="Zou G."/>
            <person name="Qin Y."/>
            <person name="Ma L."/>
            <person name="Li J."/>
            <person name="Zheng H."/>
            <person name="Wang S."/>
            <person name="Wang C."/>
            <person name="Xun L."/>
            <person name="Zhao G.-P."/>
            <person name="Zhou Z."/>
            <person name="Qu Y."/>
        </authorList>
    </citation>
    <scope>NUCLEOTIDE SEQUENCE [LARGE SCALE GENOMIC DNA]</scope>
    <source>
        <strain>114-2 / CGMCC 5302</strain>
    </source>
</reference>
<reference key="2">
    <citation type="journal article" date="2017" name="J. Am. Chem. Soc.">
        <title>Collaborative Biosynthesis of Maleimide- and Succinimide-Containing Natural Products by Fungal Polyketide Megasynthases.</title>
        <authorList>
            <person name="Sato M."/>
            <person name="Dander J.E."/>
            <person name="Sato C."/>
            <person name="Hung Y.S."/>
            <person name="Gao S.S."/>
            <person name="Tang M.C."/>
            <person name="Hang L."/>
            <person name="Winter J.M."/>
            <person name="Garg N.K."/>
            <person name="Watanabe K."/>
            <person name="Tang Y."/>
        </authorList>
    </citation>
    <scope>FUNCTION</scope>
    <scope>CATALYTIC ACTIVITY</scope>
    <scope>INDUCTION</scope>
    <scope>PATHWAY</scope>
</reference>
<reference key="3">
    <citation type="journal article" date="2020" name="Chem. Commun. (Camb.)">
        <title>Evidence for enzyme catalysed intramolecular [4+2] Diels-Alder cyclization during the biosynthesis of pyrichalasin H.</title>
        <authorList>
            <person name="Hantke V."/>
            <person name="Skellam E.J."/>
            <person name="Cox R.J."/>
        </authorList>
    </citation>
    <scope>FUNCTION</scope>
</reference>
<organism>
    <name type="scientific">Penicillium oxalicum (strain 114-2 / CGMCC 5302)</name>
    <name type="common">Penicillium decumbens</name>
    <dbReference type="NCBI Taxonomy" id="933388"/>
    <lineage>
        <taxon>Eukaryota</taxon>
        <taxon>Fungi</taxon>
        <taxon>Dikarya</taxon>
        <taxon>Ascomycota</taxon>
        <taxon>Pezizomycotina</taxon>
        <taxon>Eurotiomycetes</taxon>
        <taxon>Eurotiomycetidae</taxon>
        <taxon>Eurotiales</taxon>
        <taxon>Aspergillaceae</taxon>
        <taxon>Penicillium</taxon>
    </lineage>
</organism>
<gene>
    <name evidence="4" type="primary">poxM</name>
    <name type="ORF">PDE_04025</name>
</gene>
<keyword id="KW-0349">Heme</keyword>
<keyword id="KW-0408">Iron</keyword>
<keyword id="KW-0472">Membrane</keyword>
<keyword id="KW-0479">Metal-binding</keyword>
<keyword id="KW-0503">Monooxygenase</keyword>
<keyword id="KW-0560">Oxidoreductase</keyword>
<keyword id="KW-1185">Reference proteome</keyword>
<keyword id="KW-0812">Transmembrane</keyword>
<keyword id="KW-1133">Transmembrane helix</keyword>